<accession>Q0H8X0</accession>
<keyword id="KW-0249">Electron transport</keyword>
<keyword id="KW-0472">Membrane</keyword>
<keyword id="KW-0496">Mitochondrion</keyword>
<keyword id="KW-0999">Mitochondrion inner membrane</keyword>
<keyword id="KW-0520">NAD</keyword>
<keyword id="KW-1185">Reference proteome</keyword>
<keyword id="KW-0679">Respiratory chain</keyword>
<keyword id="KW-1278">Translocase</keyword>
<keyword id="KW-0812">Transmembrane</keyword>
<keyword id="KW-1133">Transmembrane helix</keyword>
<keyword id="KW-0813">Transport</keyword>
<keyword id="KW-0830">Ubiquinone</keyword>
<reference key="1">
    <citation type="submission" date="2005-08" db="EMBL/GenBank/DDBJ databases">
        <title>Annotation of mitochondrial genome of Ustilago maydis and comparative analysis of basidiomycete mtDNAs.</title>
        <authorList>
            <person name="Kennell J.C."/>
            <person name="Boehmer C."/>
        </authorList>
    </citation>
    <scope>NUCLEOTIDE SEQUENCE [LARGE SCALE GENOMIC DNA]</scope>
    <source>
        <strain>DSM 14603 / FGSC 9021 / UM521</strain>
    </source>
</reference>
<reference key="2">
    <citation type="journal article" date="2006" name="Nature">
        <title>Insights from the genome of the biotrophic fungal plant pathogen Ustilago maydis.</title>
        <authorList>
            <person name="Kaemper J."/>
            <person name="Kahmann R."/>
            <person name="Boelker M."/>
            <person name="Ma L.-J."/>
            <person name="Brefort T."/>
            <person name="Saville B.J."/>
            <person name="Banuett F."/>
            <person name="Kronstad J.W."/>
            <person name="Gold S.E."/>
            <person name="Mueller O."/>
            <person name="Perlin M.H."/>
            <person name="Woesten H.A.B."/>
            <person name="de Vries R."/>
            <person name="Ruiz-Herrera J."/>
            <person name="Reynaga-Pena C.G."/>
            <person name="Snetselaar K."/>
            <person name="McCann M."/>
            <person name="Perez-Martin J."/>
            <person name="Feldbruegge M."/>
            <person name="Basse C.W."/>
            <person name="Steinberg G."/>
            <person name="Ibeas J.I."/>
            <person name="Holloman W."/>
            <person name="Guzman P."/>
            <person name="Farman M.L."/>
            <person name="Stajich J.E."/>
            <person name="Sentandreu R."/>
            <person name="Gonzalez-Prieto J.M."/>
            <person name="Kennell J.C."/>
            <person name="Molina L."/>
            <person name="Schirawski J."/>
            <person name="Mendoza-Mendoza A."/>
            <person name="Greilinger D."/>
            <person name="Muench K."/>
            <person name="Roessel N."/>
            <person name="Scherer M."/>
            <person name="Vranes M."/>
            <person name="Ladendorf O."/>
            <person name="Vincon V."/>
            <person name="Fuchs U."/>
            <person name="Sandrock B."/>
            <person name="Meng S."/>
            <person name="Ho E.C.H."/>
            <person name="Cahill M.J."/>
            <person name="Boyce K.J."/>
            <person name="Klose J."/>
            <person name="Klosterman S.J."/>
            <person name="Deelstra H.J."/>
            <person name="Ortiz-Castellanos L."/>
            <person name="Li W."/>
            <person name="Sanchez-Alonso P."/>
            <person name="Schreier P.H."/>
            <person name="Haeuser-Hahn I."/>
            <person name="Vaupel M."/>
            <person name="Koopmann E."/>
            <person name="Friedrich G."/>
            <person name="Voss H."/>
            <person name="Schlueter T."/>
            <person name="Margolis J."/>
            <person name="Platt D."/>
            <person name="Swimmer C."/>
            <person name="Gnirke A."/>
            <person name="Chen F."/>
            <person name="Vysotskaia V."/>
            <person name="Mannhaupt G."/>
            <person name="Gueldener U."/>
            <person name="Muensterkoetter M."/>
            <person name="Haase D."/>
            <person name="Oesterheld M."/>
            <person name="Mewes H.-W."/>
            <person name="Mauceli E.W."/>
            <person name="DeCaprio D."/>
            <person name="Wade C.M."/>
            <person name="Butler J."/>
            <person name="Young S.K."/>
            <person name="Jaffe D.B."/>
            <person name="Calvo S.E."/>
            <person name="Nusbaum C."/>
            <person name="Galagan J.E."/>
            <person name="Birren B.W."/>
        </authorList>
    </citation>
    <scope>NUCLEOTIDE SEQUENCE [LARGE SCALE GENOMIC DNA]</scope>
    <source>
        <strain>DSM 14603 / FGSC 9021 / UM521</strain>
    </source>
</reference>
<dbReference type="EC" id="7.1.1.2"/>
<dbReference type="EMBL" id="DQ157700">
    <property type="protein sequence ID" value="AAZ67017.1"/>
    <property type="molecule type" value="Genomic_DNA"/>
</dbReference>
<dbReference type="EMBL" id="AACP01000277">
    <property type="status" value="NOT_ANNOTATED_CDS"/>
    <property type="molecule type" value="Genomic_DNA"/>
</dbReference>
<dbReference type="RefSeq" id="YP_762702.1">
    <property type="nucleotide sequence ID" value="NC_008368.1"/>
</dbReference>
<dbReference type="SMR" id="Q0H8X0"/>
<dbReference type="STRING" id="237631.Q0H8X0"/>
<dbReference type="GeneID" id="4308282"/>
<dbReference type="InParanoid" id="Q0H8X0"/>
<dbReference type="Proteomes" id="UP000000561">
    <property type="component" value="Mitochondrion"/>
</dbReference>
<dbReference type="GO" id="GO:0005743">
    <property type="term" value="C:mitochondrial inner membrane"/>
    <property type="evidence" value="ECO:0007669"/>
    <property type="project" value="UniProtKB-SubCell"/>
</dbReference>
<dbReference type="GO" id="GO:0045271">
    <property type="term" value="C:respiratory chain complex I"/>
    <property type="evidence" value="ECO:0000318"/>
    <property type="project" value="GO_Central"/>
</dbReference>
<dbReference type="GO" id="GO:0008137">
    <property type="term" value="F:NADH dehydrogenase (ubiquinone) activity"/>
    <property type="evidence" value="ECO:0007669"/>
    <property type="project" value="UniProtKB-EC"/>
</dbReference>
<dbReference type="GO" id="GO:0042773">
    <property type="term" value="P:ATP synthesis coupled electron transport"/>
    <property type="evidence" value="ECO:0007669"/>
    <property type="project" value="InterPro"/>
</dbReference>
<dbReference type="GO" id="GO:0015990">
    <property type="term" value="P:electron transport coupled proton transport"/>
    <property type="evidence" value="ECO:0000318"/>
    <property type="project" value="GO_Central"/>
</dbReference>
<dbReference type="Gene3D" id="1.20.5.2700">
    <property type="match status" value="1"/>
</dbReference>
<dbReference type="InterPro" id="IPR010934">
    <property type="entry name" value="NADH_DH_su5_C"/>
</dbReference>
<dbReference type="InterPro" id="IPR018393">
    <property type="entry name" value="NADHpl_OxRdtase_5_subgr"/>
</dbReference>
<dbReference type="InterPro" id="IPR001750">
    <property type="entry name" value="ND/Mrp_TM"/>
</dbReference>
<dbReference type="InterPro" id="IPR003945">
    <property type="entry name" value="NU5C-like"/>
</dbReference>
<dbReference type="InterPro" id="IPR001516">
    <property type="entry name" value="Proton_antipo_N"/>
</dbReference>
<dbReference type="NCBIfam" id="TIGR01974">
    <property type="entry name" value="NDH_I_L"/>
    <property type="match status" value="1"/>
</dbReference>
<dbReference type="NCBIfam" id="NF005141">
    <property type="entry name" value="PRK06590.1"/>
    <property type="match status" value="1"/>
</dbReference>
<dbReference type="PANTHER" id="PTHR42829">
    <property type="entry name" value="NADH-UBIQUINONE OXIDOREDUCTASE CHAIN 5"/>
    <property type="match status" value="1"/>
</dbReference>
<dbReference type="PANTHER" id="PTHR42829:SF2">
    <property type="entry name" value="NADH-UBIQUINONE OXIDOREDUCTASE CHAIN 5"/>
    <property type="match status" value="1"/>
</dbReference>
<dbReference type="Pfam" id="PF06455">
    <property type="entry name" value="NADH5_C"/>
    <property type="match status" value="1"/>
</dbReference>
<dbReference type="Pfam" id="PF00361">
    <property type="entry name" value="Proton_antipo_M"/>
    <property type="match status" value="1"/>
</dbReference>
<dbReference type="Pfam" id="PF00662">
    <property type="entry name" value="Proton_antipo_N"/>
    <property type="match status" value="1"/>
</dbReference>
<dbReference type="PRINTS" id="PR01434">
    <property type="entry name" value="NADHDHGNASE5"/>
</dbReference>
<dbReference type="PRINTS" id="PR01435">
    <property type="entry name" value="NPOXDRDTASE5"/>
</dbReference>
<geneLocation type="mitochondrion"/>
<organism>
    <name type="scientific">Mycosarcoma maydis</name>
    <name type="common">Corn smut fungus</name>
    <name type="synonym">Ustilago maydis</name>
    <dbReference type="NCBI Taxonomy" id="5270"/>
    <lineage>
        <taxon>Eukaryota</taxon>
        <taxon>Fungi</taxon>
        <taxon>Dikarya</taxon>
        <taxon>Basidiomycota</taxon>
        <taxon>Ustilaginomycotina</taxon>
        <taxon>Ustilaginomycetes</taxon>
        <taxon>Ustilaginales</taxon>
        <taxon>Ustilaginaceae</taxon>
        <taxon>Mycosarcoma</taxon>
    </lineage>
</organism>
<comment type="function">
    <text evidence="1">Core subunit of the mitochondrial membrane respiratory chain NADH dehydrogenase (Complex I) that is believed to belong to the minimal assembly required for catalysis. Complex I functions in the transfer of electrons from NADH to the respiratory chain. The immediate electron acceptor for the enzyme is believed to be ubiquinone (By similarity).</text>
</comment>
<comment type="catalytic activity">
    <reaction>
        <text>a ubiquinone + NADH + 5 H(+)(in) = a ubiquinol + NAD(+) + 4 H(+)(out)</text>
        <dbReference type="Rhea" id="RHEA:29091"/>
        <dbReference type="Rhea" id="RHEA-COMP:9565"/>
        <dbReference type="Rhea" id="RHEA-COMP:9566"/>
        <dbReference type="ChEBI" id="CHEBI:15378"/>
        <dbReference type="ChEBI" id="CHEBI:16389"/>
        <dbReference type="ChEBI" id="CHEBI:17976"/>
        <dbReference type="ChEBI" id="CHEBI:57540"/>
        <dbReference type="ChEBI" id="CHEBI:57945"/>
        <dbReference type="EC" id="7.1.1.2"/>
    </reaction>
</comment>
<comment type="subcellular location">
    <subcellularLocation>
        <location evidence="1">Mitochondrion inner membrane</location>
        <topology evidence="1">Multi-pass membrane protein</topology>
    </subcellularLocation>
</comment>
<comment type="similarity">
    <text evidence="3">Belongs to the complex I subunit 5 family.</text>
</comment>
<name>NU5M_MYCMD</name>
<sequence>MYLSLLLLPMFGSAVTGLLGRKIGVTGAHIITCSCLITSAILAIVAFYEVGLCNSSVSINLISWIDSELMDVSWGFMFDSLTVSMLLPVLVVSSLVHIFSVDYMSADPHNQRFFAYLSMFTFFMLVLVTGDNYLIMFVGWEGIGISSYLLINFWFTRIQANKSAIKALVVNRVGDMFLSIGFFAIFFVFGNLDYSTVFSIAPFINETIITIIGLLLLLAAMGKSAQLGLHTWLPDPSMEGPTPVSALIHAATLVTAGVYLLLRSSPVIEYGPTTLIVITWVGALTAFFAASTGLLQNDLKRVIAYSTCSQMGYLFMACGLSQYNVALFHLVNHAFFKALLFLAAGAVLHATYDQQDQRRLGGLIGFLPFTYTAILIGSLSLIALPWLTGFYSKDLILEVAYGQYEFSGQVAYWLGTLSACLTAFYSLRLISLTFLTYPNASKSVYLHTHDAPTIVMIPLIILSLLAIFFGYVARDLFVGMGSDFLSPSLFTHPSHITLIEAEFGLPQIIKLLPAIGTLLGAGLALYLYHMLPVFTIDLTNSTLGQKLYRFFNGKYYVDVIYNHYIIYGGLQLGYVISKVLDRGIIELVGPYGLATGLTSGSKDIAKLDTGNLTSYALYLAIALVTLIMILLSPVLLNAALINAPLILVLLVAMVCIPYINSSSNDTVTTVQVKL</sequence>
<gene>
    <name type="primary">ND5</name>
    <name type="synonym">NAD5</name>
</gene>
<feature type="chain" id="PRO_0000271149" description="NADH-ubiquinone oxidoreductase chain 5">
    <location>
        <begin position="1"/>
        <end position="674"/>
    </location>
</feature>
<feature type="transmembrane region" description="Helical" evidence="2">
    <location>
        <begin position="27"/>
        <end position="47"/>
    </location>
</feature>
<feature type="transmembrane region" description="Helical" evidence="2">
    <location>
        <begin position="81"/>
        <end position="101"/>
    </location>
</feature>
<feature type="transmembrane region" description="Helical" evidence="2">
    <location>
        <begin position="113"/>
        <end position="133"/>
    </location>
</feature>
<feature type="transmembrane region" description="Helical" evidence="2">
    <location>
        <begin position="135"/>
        <end position="155"/>
    </location>
</feature>
<feature type="transmembrane region" description="Helical" evidence="2">
    <location>
        <begin position="173"/>
        <end position="193"/>
    </location>
</feature>
<feature type="transmembrane region" description="Helical" evidence="2">
    <location>
        <begin position="200"/>
        <end position="220"/>
    </location>
</feature>
<feature type="transmembrane region" description="Helical" evidence="2">
    <location>
        <begin position="242"/>
        <end position="262"/>
    </location>
</feature>
<feature type="transmembrane region" description="Helical" evidence="2">
    <location>
        <begin position="275"/>
        <end position="295"/>
    </location>
</feature>
<feature type="transmembrane region" description="Helical" evidence="2">
    <location>
        <begin position="301"/>
        <end position="323"/>
    </location>
</feature>
<feature type="transmembrane region" description="Helical" evidence="2">
    <location>
        <begin position="325"/>
        <end position="345"/>
    </location>
</feature>
<feature type="transmembrane region" description="Helical" evidence="2">
    <location>
        <begin position="363"/>
        <end position="383"/>
    </location>
</feature>
<feature type="transmembrane region" description="Helical" evidence="2">
    <location>
        <begin position="410"/>
        <end position="430"/>
    </location>
</feature>
<feature type="transmembrane region" description="Helical" evidence="2">
    <location>
        <begin position="453"/>
        <end position="473"/>
    </location>
</feature>
<feature type="transmembrane region" description="Helical" evidence="2">
    <location>
        <begin position="514"/>
        <end position="534"/>
    </location>
</feature>
<feature type="transmembrane region" description="Helical" evidence="2">
    <location>
        <begin position="556"/>
        <end position="576"/>
    </location>
</feature>
<feature type="transmembrane region" description="Helical" evidence="2">
    <location>
        <begin position="616"/>
        <end position="636"/>
    </location>
</feature>
<feature type="transmembrane region" description="Helical" evidence="2">
    <location>
        <begin position="639"/>
        <end position="659"/>
    </location>
</feature>
<evidence type="ECO:0000250" key="1"/>
<evidence type="ECO:0000255" key="2"/>
<evidence type="ECO:0000305" key="3"/>
<proteinExistence type="inferred from homology"/>
<protein>
    <recommendedName>
        <fullName>NADH-ubiquinone oxidoreductase chain 5</fullName>
        <ecNumber>7.1.1.2</ecNumber>
    </recommendedName>
    <alternativeName>
        <fullName>NADH dehydrogenase subunit 5</fullName>
    </alternativeName>
</protein>